<sequence length="1025" mass="110924">MKFFALFIYRPVATILLSVAITLCGILGFRMLPVAPLPQVDFPVIMVSASLPGASPETMASSVATPLERSLGRIAGVSEMTSSSSLGSTRIILQFDFDRDINGAARDVQAAINAAQSLLPSGMPSRPTYRKANPSDAPIMILTLTSDTYSQGELYDFASTQLAPTISQIDGVGDVDVGGSSLPAVRVGLNPQALFNQGVSLDDVRTAISNANVRKPQGALEDGTHRWQIQTNDELKTAAEYQPLIIHYNNGGAVRLGDVATVTDSVQDVRNAGMTNAKPAILLMIRKLPEANIIQTVDSIRARLPELQSTIPAAIDLQIAQDRSPTIRASLEEVEQTLIISVALVILVVFLFLRSGRATIIPAVAVPVSLIGTFAAMYLCGFSLNNLSLMALTIATGFVVDDAIVVLENIARHLEAGMKPLQAALQGTREVGFTVLSMSLSLVAVFLPLLLMGGLPGRLLREFAVTLSVAIGISLLVSLTLTPMMCGWMLKASKPREQKRLRGFGRMLVALQQGYGKSLKWVLNHTRLVGAVLLGTIALNIWLYISIPKTFFPEQDTGVLMGGIQADQSISFQAMRGKLQDFMKIIRDDPAVDNVTGFTGGSRVNSGMMFITLKPRGERSETAQQIIDRLRKKLAKEPGANLFLMAVQDIRVGGRQANASYQYTLLSDDLAALREWEPKIRKKLATLPELADVNSDQEDNGAEMNLIYDRDTMARLGIDVQAANSLLNNAFGQRQISTIYQPMNQYKVVMEVDPRYTQDISALEKMFVINNEGKAIPLSYFAKWQPANAPLSVNHQGLSAASTISFNLPTGKSLSDASAAIDRAMTQLGVPSTVRGSFAGTAQVFQETMNSQVILIIAAIATVYIVLGILYESYVHPLTILSTLPSAGVGALLALELFNAPFSLIALIGIMLLIGIVKKNAIMMVDFALEAQRHGNLTPQEAIFQACLLRFRPIMMTTLAALFGALPLVLSGGDGSELRQPLGITIVGGLVMSQLLTLYTTPVVYLFFDRLRLRFSRKPKQAVTE</sequence>
<organism>
    <name type="scientific">Escherichia coli O6:H1 (strain CFT073 / ATCC 700928 / UPEC)</name>
    <dbReference type="NCBI Taxonomy" id="199310"/>
    <lineage>
        <taxon>Bacteria</taxon>
        <taxon>Pseudomonadati</taxon>
        <taxon>Pseudomonadota</taxon>
        <taxon>Gammaproteobacteria</taxon>
        <taxon>Enterobacterales</taxon>
        <taxon>Enterobacteriaceae</taxon>
        <taxon>Escherichia</taxon>
    </lineage>
</organism>
<gene>
    <name evidence="2" type="primary">mdtC</name>
    <name type="ordered locus">c2602</name>
</gene>
<comment type="function">
    <text evidence="2">The MdtABC tripartite complex confers resistance against novobiocin and deoxycholate.</text>
</comment>
<comment type="subunit">
    <text evidence="2">Part of a tripartite efflux system composed of MdtA, MdtB and MdtC. MdtC forms a heteromultimer with MdtB.</text>
</comment>
<comment type="subcellular location">
    <subcellularLocation>
        <location evidence="2">Cell inner membrane</location>
        <topology evidence="2">Multi-pass membrane protein</topology>
    </subcellularLocation>
</comment>
<comment type="induction">
    <text>The mdtABC operon is transcriptionally activated by BaeR.</text>
</comment>
<comment type="similarity">
    <text evidence="2">Belongs to the resistance-nodulation-cell division (RND) (TC 2.A.6) family. MdtC subfamily.</text>
</comment>
<evidence type="ECO:0000255" key="1"/>
<evidence type="ECO:0000255" key="2">
    <source>
        <dbReference type="HAMAP-Rule" id="MF_01424"/>
    </source>
</evidence>
<proteinExistence type="evidence at transcript level"/>
<dbReference type="EMBL" id="AE014075">
    <property type="protein sequence ID" value="AAN81058.1"/>
    <property type="molecule type" value="Genomic_DNA"/>
</dbReference>
<dbReference type="RefSeq" id="WP_000667558.1">
    <property type="nucleotide sequence ID" value="NZ_CP051263.1"/>
</dbReference>
<dbReference type="SMR" id="Q8FG03"/>
<dbReference type="STRING" id="199310.c2602"/>
<dbReference type="KEGG" id="ecc:c2602"/>
<dbReference type="eggNOG" id="COG0841">
    <property type="taxonomic scope" value="Bacteria"/>
</dbReference>
<dbReference type="HOGENOM" id="CLU_002755_1_2_6"/>
<dbReference type="BioCyc" id="ECOL199310:C2602-MONOMER"/>
<dbReference type="Proteomes" id="UP000001410">
    <property type="component" value="Chromosome"/>
</dbReference>
<dbReference type="GO" id="GO:0005886">
    <property type="term" value="C:plasma membrane"/>
    <property type="evidence" value="ECO:0007669"/>
    <property type="project" value="UniProtKB-SubCell"/>
</dbReference>
<dbReference type="GO" id="GO:0042910">
    <property type="term" value="F:xenobiotic transmembrane transporter activity"/>
    <property type="evidence" value="ECO:0007669"/>
    <property type="project" value="TreeGrafter"/>
</dbReference>
<dbReference type="FunFam" id="1.20.1640.10:FF:000001">
    <property type="entry name" value="Efflux pump membrane transporter"/>
    <property type="match status" value="1"/>
</dbReference>
<dbReference type="FunFam" id="3.30.70.1430:FF:000001">
    <property type="entry name" value="Efflux pump membrane transporter"/>
    <property type="match status" value="1"/>
</dbReference>
<dbReference type="FunFam" id="3.30.2090.10:FF:000004">
    <property type="entry name" value="Multidrug resistance protein MdtC"/>
    <property type="match status" value="1"/>
</dbReference>
<dbReference type="FunFam" id="3.30.2090.10:FF:000005">
    <property type="entry name" value="Multidrug resistance protein MdtC"/>
    <property type="match status" value="1"/>
</dbReference>
<dbReference type="FunFam" id="3.30.70.1430:FF:000004">
    <property type="entry name" value="Multidrug resistance protein MdtC"/>
    <property type="match status" value="1"/>
</dbReference>
<dbReference type="Gene3D" id="3.30.70.1430">
    <property type="entry name" value="Multidrug efflux transporter AcrB pore domain"/>
    <property type="match status" value="2"/>
</dbReference>
<dbReference type="Gene3D" id="3.30.70.1440">
    <property type="entry name" value="Multidrug efflux transporter AcrB pore domain"/>
    <property type="match status" value="1"/>
</dbReference>
<dbReference type="Gene3D" id="3.30.70.1320">
    <property type="entry name" value="Multidrug efflux transporter AcrB pore domain like"/>
    <property type="match status" value="1"/>
</dbReference>
<dbReference type="Gene3D" id="3.30.2090.10">
    <property type="entry name" value="Multidrug efflux transporter AcrB TolC docking domain, DN and DC subdomains"/>
    <property type="match status" value="2"/>
</dbReference>
<dbReference type="Gene3D" id="1.20.1640.10">
    <property type="entry name" value="Multidrug efflux transporter AcrB transmembrane domain"/>
    <property type="match status" value="2"/>
</dbReference>
<dbReference type="HAMAP" id="MF_01424">
    <property type="entry name" value="MdtC"/>
    <property type="match status" value="1"/>
</dbReference>
<dbReference type="InterPro" id="IPR027463">
    <property type="entry name" value="AcrB_DN_DC_subdom"/>
</dbReference>
<dbReference type="InterPro" id="IPR001036">
    <property type="entry name" value="Acrflvin-R"/>
</dbReference>
<dbReference type="InterPro" id="IPR023931">
    <property type="entry name" value="Multidrug-R_MdtC"/>
</dbReference>
<dbReference type="NCBIfam" id="NF007905">
    <property type="entry name" value="PRK10614.1"/>
    <property type="match status" value="1"/>
</dbReference>
<dbReference type="NCBIfam" id="NF033617">
    <property type="entry name" value="RND_permease_2"/>
    <property type="match status" value="1"/>
</dbReference>
<dbReference type="PANTHER" id="PTHR32063">
    <property type="match status" value="1"/>
</dbReference>
<dbReference type="PANTHER" id="PTHR32063:SF34">
    <property type="entry name" value="MULTIDRUG RESISTANCE PROTEIN MDTC"/>
    <property type="match status" value="1"/>
</dbReference>
<dbReference type="Pfam" id="PF00873">
    <property type="entry name" value="ACR_tran"/>
    <property type="match status" value="1"/>
</dbReference>
<dbReference type="PRINTS" id="PR00702">
    <property type="entry name" value="ACRIFLAVINRP"/>
</dbReference>
<dbReference type="SUPFAM" id="SSF82693">
    <property type="entry name" value="Multidrug efflux transporter AcrB pore domain, PN1, PN2, PC1 and PC2 subdomains"/>
    <property type="match status" value="4"/>
</dbReference>
<dbReference type="SUPFAM" id="SSF82714">
    <property type="entry name" value="Multidrug efflux transporter AcrB TolC docking domain, DN and DC subdomains"/>
    <property type="match status" value="2"/>
</dbReference>
<dbReference type="SUPFAM" id="SSF82866">
    <property type="entry name" value="Multidrug efflux transporter AcrB transmembrane domain"/>
    <property type="match status" value="2"/>
</dbReference>
<reference key="1">
    <citation type="journal article" date="2002" name="Proc. Natl. Acad. Sci. U.S.A.">
        <title>Extensive mosaic structure revealed by the complete genome sequence of uropathogenic Escherichia coli.</title>
        <authorList>
            <person name="Welch R.A."/>
            <person name="Burland V."/>
            <person name="Plunkett G. III"/>
            <person name="Redford P."/>
            <person name="Roesch P."/>
            <person name="Rasko D."/>
            <person name="Buckles E.L."/>
            <person name="Liou S.-R."/>
            <person name="Boutin A."/>
            <person name="Hackett J."/>
            <person name="Stroud D."/>
            <person name="Mayhew G.F."/>
            <person name="Rose D.J."/>
            <person name="Zhou S."/>
            <person name="Schwartz D.C."/>
            <person name="Perna N.T."/>
            <person name="Mobley H.L.T."/>
            <person name="Donnenberg M.S."/>
            <person name="Blattner F.R."/>
        </authorList>
    </citation>
    <scope>NUCLEOTIDE SEQUENCE [LARGE SCALE GENOMIC DNA]</scope>
    <source>
        <strain>CFT073 / ATCC 700928 / UPEC</strain>
    </source>
</reference>
<name>MDTC_ECOL6</name>
<protein>
    <recommendedName>
        <fullName evidence="2">Multidrug resistance protein MdtC</fullName>
    </recommendedName>
    <alternativeName>
        <fullName evidence="2">Multidrug transporter MdtC</fullName>
    </alternativeName>
</protein>
<accession>Q8FG03</accession>
<feature type="chain" id="PRO_0000161832" description="Multidrug resistance protein MdtC">
    <location>
        <begin position="1"/>
        <end position="1025"/>
    </location>
</feature>
<feature type="topological domain" description="Cytoplasmic" evidence="1">
    <location>
        <begin position="1"/>
        <end position="6"/>
    </location>
</feature>
<feature type="transmembrane region" description="Helical" evidence="2">
    <location>
        <begin position="7"/>
        <end position="29"/>
    </location>
</feature>
<feature type="topological domain" description="Periplasmic" evidence="1">
    <location>
        <begin position="30"/>
        <end position="335"/>
    </location>
</feature>
<feature type="transmembrane region" description="Helical" evidence="2">
    <location>
        <begin position="336"/>
        <end position="353"/>
    </location>
</feature>
<feature type="topological domain" description="Cytoplasmic" evidence="1">
    <location>
        <begin position="354"/>
        <end position="359"/>
    </location>
</feature>
<feature type="transmembrane region" description="Helical" evidence="2">
    <location>
        <begin position="360"/>
        <end position="379"/>
    </location>
</feature>
<feature type="topological domain" description="Periplasmic" evidence="1">
    <location>
        <begin position="380"/>
        <end position="388"/>
    </location>
</feature>
<feature type="transmembrane region" description="Helical" evidence="2">
    <location>
        <begin position="389"/>
        <end position="411"/>
    </location>
</feature>
<feature type="topological domain" description="Cytoplasmic" evidence="1">
    <location>
        <begin position="412"/>
        <end position="430"/>
    </location>
</feature>
<feature type="transmembrane region" description="Helical" evidence="2">
    <location>
        <begin position="431"/>
        <end position="453"/>
    </location>
</feature>
<feature type="topological domain" description="Periplasmic" evidence="1">
    <location>
        <begin position="454"/>
        <end position="467"/>
    </location>
</feature>
<feature type="transmembrane region" description="Helical" evidence="2">
    <location>
        <begin position="468"/>
        <end position="490"/>
    </location>
</feature>
<feature type="topological domain" description="Cytoplasmic" evidence="1">
    <location>
        <begin position="491"/>
        <end position="852"/>
    </location>
</feature>
<feature type="transmembrane region" description="Helical" evidence="2">
    <location>
        <begin position="853"/>
        <end position="875"/>
    </location>
</feature>
<feature type="topological domain" description="Periplasmic" evidence="1">
    <location>
        <begin position="876"/>
        <end position="894"/>
    </location>
</feature>
<feature type="transmembrane region" description="Helical" evidence="2">
    <location>
        <begin position="895"/>
        <end position="917"/>
    </location>
</feature>
<feature type="topological domain" description="Cytoplasmic" evidence="1">
    <location>
        <begin position="918"/>
        <end position="947"/>
    </location>
</feature>
<feature type="transmembrane region" description="Helical" evidence="2">
    <location>
        <begin position="948"/>
        <end position="970"/>
    </location>
</feature>
<feature type="topological domain" description="Periplasmic" evidence="1">
    <location>
        <begin position="971"/>
        <end position="984"/>
    </location>
</feature>
<feature type="transmembrane region" description="Helical" evidence="2">
    <location>
        <begin position="985"/>
        <end position="1007"/>
    </location>
</feature>
<feature type="topological domain" description="Cytoplasmic" evidence="1">
    <location>
        <begin position="1008"/>
        <end position="1025"/>
    </location>
</feature>
<keyword id="KW-0997">Cell inner membrane</keyword>
<keyword id="KW-1003">Cell membrane</keyword>
<keyword id="KW-0472">Membrane</keyword>
<keyword id="KW-1185">Reference proteome</keyword>
<keyword id="KW-0812">Transmembrane</keyword>
<keyword id="KW-1133">Transmembrane helix</keyword>
<keyword id="KW-0813">Transport</keyword>